<proteinExistence type="evidence at protein level"/>
<reference key="1">
    <citation type="journal article" date="1996" name="Mol. Cell. Biol.">
        <title>Human hepatocyte nuclear factor 4 isoforms are encoded by distinct and differentially expressed genes.</title>
        <authorList>
            <person name="Drewes T."/>
            <person name="Senkel S."/>
            <person name="Holewa B."/>
            <person name="Ryffel G.U."/>
        </authorList>
    </citation>
    <scope>NUCLEOTIDE SEQUENCE [MRNA] (ISOFORM 1)</scope>
    <source>
        <tissue>Kidney</tissue>
    </source>
</reference>
<reference key="2">
    <citation type="journal article" date="2007" name="BMC Genomics">
        <title>The full-ORF clone resource of the German cDNA consortium.</title>
        <authorList>
            <person name="Bechtel S."/>
            <person name="Rosenfelder H."/>
            <person name="Duda A."/>
            <person name="Schmidt C.P."/>
            <person name="Ernst U."/>
            <person name="Wellenreuther R."/>
            <person name="Mehrle A."/>
            <person name="Schuster C."/>
            <person name="Bahr A."/>
            <person name="Bloecker H."/>
            <person name="Heubner D."/>
            <person name="Hoerlein A."/>
            <person name="Michel G."/>
            <person name="Wedler H."/>
            <person name="Koehrer K."/>
            <person name="Ottenwaelder B."/>
            <person name="Poustka A."/>
            <person name="Wiemann S."/>
            <person name="Schupp I."/>
        </authorList>
    </citation>
    <scope>NUCLEOTIDE SEQUENCE [LARGE SCALE MRNA] (ISOFORM 2)</scope>
</reference>
<reference key="3">
    <citation type="journal article" date="1999" name="Diabetes">
        <title>Hepatocyte nuclear factor-4gamma: cDNA sequence, gene organization, and mutation screening in early-onset autosomal-dominant type 2 diabetes.</title>
        <authorList>
            <person name="Plengvidhya N."/>
            <person name="Antonellis A."/>
            <person name="Wogan L.T."/>
            <person name="Poleev A."/>
            <person name="Borgschulze M."/>
            <person name="Warram J.H."/>
            <person name="Ryffel G.U."/>
            <person name="Krolewski A.S."/>
            <person name="Doria A."/>
        </authorList>
    </citation>
    <scope>NUCLEOTIDE SEQUENCE [GENOMIC DNA / MRNA] (ISOFORM 1)</scope>
    <scope>VARIANT ILE-190</scope>
</reference>
<reference key="4">
    <citation type="journal article" date="2006" name="Nature">
        <title>DNA sequence and analysis of human chromosome 8.</title>
        <authorList>
            <person name="Nusbaum C."/>
            <person name="Mikkelsen T.S."/>
            <person name="Zody M.C."/>
            <person name="Asakawa S."/>
            <person name="Taudien S."/>
            <person name="Garber M."/>
            <person name="Kodira C.D."/>
            <person name="Schueler M.G."/>
            <person name="Shimizu A."/>
            <person name="Whittaker C.A."/>
            <person name="Chang J.L."/>
            <person name="Cuomo C.A."/>
            <person name="Dewar K."/>
            <person name="FitzGerald M.G."/>
            <person name="Yang X."/>
            <person name="Allen N.R."/>
            <person name="Anderson S."/>
            <person name="Asakawa T."/>
            <person name="Blechschmidt K."/>
            <person name="Bloom T."/>
            <person name="Borowsky M.L."/>
            <person name="Butler J."/>
            <person name="Cook A."/>
            <person name="Corum B."/>
            <person name="DeArellano K."/>
            <person name="DeCaprio D."/>
            <person name="Dooley K.T."/>
            <person name="Dorris L. III"/>
            <person name="Engels R."/>
            <person name="Gloeckner G."/>
            <person name="Hafez N."/>
            <person name="Hagopian D.S."/>
            <person name="Hall J.L."/>
            <person name="Ishikawa S.K."/>
            <person name="Jaffe D.B."/>
            <person name="Kamat A."/>
            <person name="Kudoh J."/>
            <person name="Lehmann R."/>
            <person name="Lokitsang T."/>
            <person name="Macdonald P."/>
            <person name="Major J.E."/>
            <person name="Matthews C.D."/>
            <person name="Mauceli E."/>
            <person name="Menzel U."/>
            <person name="Mihalev A.H."/>
            <person name="Minoshima S."/>
            <person name="Murayama Y."/>
            <person name="Naylor J.W."/>
            <person name="Nicol R."/>
            <person name="Nguyen C."/>
            <person name="O'Leary S.B."/>
            <person name="O'Neill K."/>
            <person name="Parker S.C.J."/>
            <person name="Polley A."/>
            <person name="Raymond C.K."/>
            <person name="Reichwald K."/>
            <person name="Rodriguez J."/>
            <person name="Sasaki T."/>
            <person name="Schilhabel M."/>
            <person name="Siddiqui R."/>
            <person name="Smith C.L."/>
            <person name="Sneddon T.P."/>
            <person name="Talamas J.A."/>
            <person name="Tenzin P."/>
            <person name="Topham K."/>
            <person name="Venkataraman V."/>
            <person name="Wen G."/>
            <person name="Yamazaki S."/>
            <person name="Young S.K."/>
            <person name="Zeng Q."/>
            <person name="Zimmer A.R."/>
            <person name="Rosenthal A."/>
            <person name="Birren B.W."/>
            <person name="Platzer M."/>
            <person name="Shimizu N."/>
            <person name="Lander E.S."/>
        </authorList>
    </citation>
    <scope>NUCLEOTIDE SEQUENCE [LARGE SCALE GENOMIC DNA]</scope>
</reference>
<reference key="5">
    <citation type="journal article" date="2004" name="Genome Res.">
        <title>The status, quality, and expansion of the NIH full-length cDNA project: the Mammalian Gene Collection (MGC).</title>
        <authorList>
            <consortium name="The MGC Project Team"/>
        </authorList>
    </citation>
    <scope>NUCLEOTIDE SEQUENCE [LARGE SCALE MRNA] (ISOFORM 1)</scope>
</reference>
<reference key="6">
    <citation type="journal article" date="2014" name="J. Proteomics">
        <title>An enzyme assisted RP-RPLC approach for in-depth analysis of human liver phosphoproteome.</title>
        <authorList>
            <person name="Bian Y."/>
            <person name="Song C."/>
            <person name="Cheng K."/>
            <person name="Dong M."/>
            <person name="Wang F."/>
            <person name="Huang J."/>
            <person name="Sun D."/>
            <person name="Wang L."/>
            <person name="Ye M."/>
            <person name="Zou H."/>
        </authorList>
    </citation>
    <scope>IDENTIFICATION BY MASS SPECTROMETRY [LARGE SCALE ANALYSIS]</scope>
    <source>
        <tissue>Liver</tissue>
    </source>
</reference>
<reference key="7">
    <citation type="journal article" date="2002" name="Structure">
        <title>Hepatocyte nuclear factor 4 is a transcription factor that constitutively binds fatty acids.</title>
        <authorList>
            <person name="Wisely G.B."/>
            <person name="Miller A.B."/>
            <person name="Davis R.G."/>
            <person name="Thornquest A.D. Jr."/>
            <person name="Johnson R."/>
            <person name="Spitzer T."/>
            <person name="Sefler A."/>
            <person name="Shearer B."/>
            <person name="Moore J.T."/>
            <person name="Miller A.B."/>
            <person name="Willson T.M."/>
            <person name="Williams S.P."/>
        </authorList>
    </citation>
    <scope>X-RAY CRYSTALLOGRAPHY (2.7 ANGSTROMS) OF 103-328</scope>
</reference>
<gene>
    <name type="primary">HNF4G</name>
    <name type="synonym">NR2A2</name>
</gene>
<organism>
    <name type="scientific">Homo sapiens</name>
    <name type="common">Human</name>
    <dbReference type="NCBI Taxonomy" id="9606"/>
    <lineage>
        <taxon>Eukaryota</taxon>
        <taxon>Metazoa</taxon>
        <taxon>Chordata</taxon>
        <taxon>Craniata</taxon>
        <taxon>Vertebrata</taxon>
        <taxon>Euteleostomi</taxon>
        <taxon>Mammalia</taxon>
        <taxon>Eutheria</taxon>
        <taxon>Euarchontoglires</taxon>
        <taxon>Primates</taxon>
        <taxon>Haplorrhini</taxon>
        <taxon>Catarrhini</taxon>
        <taxon>Hominidae</taxon>
        <taxon>Homo</taxon>
    </lineage>
</organism>
<dbReference type="EMBL" id="Z49826">
    <property type="protein sequence ID" value="CAA89990.2"/>
    <property type="molecule type" value="mRNA"/>
</dbReference>
<dbReference type="EMBL" id="BX571750">
    <property type="protein sequence ID" value="CAE11875.1"/>
    <property type="status" value="ALT_INIT"/>
    <property type="molecule type" value="mRNA"/>
</dbReference>
<dbReference type="EMBL" id="AF133504">
    <property type="protein sequence ID" value="AAF00110.1"/>
    <property type="molecule type" value="Genomic_DNA"/>
</dbReference>
<dbReference type="EMBL" id="AF133496">
    <property type="protein sequence ID" value="AAF00110.1"/>
    <property type="status" value="JOINED"/>
    <property type="molecule type" value="Genomic_DNA"/>
</dbReference>
<dbReference type="EMBL" id="AF133497">
    <property type="protein sequence ID" value="AAF00110.1"/>
    <property type="status" value="JOINED"/>
    <property type="molecule type" value="Genomic_DNA"/>
</dbReference>
<dbReference type="EMBL" id="AF133498">
    <property type="protein sequence ID" value="AAF00110.1"/>
    <property type="status" value="JOINED"/>
    <property type="molecule type" value="Genomic_DNA"/>
</dbReference>
<dbReference type="EMBL" id="AF133499">
    <property type="protein sequence ID" value="AAF00110.1"/>
    <property type="status" value="JOINED"/>
    <property type="molecule type" value="Genomic_DNA"/>
</dbReference>
<dbReference type="EMBL" id="AF133500">
    <property type="protein sequence ID" value="AAF00110.1"/>
    <property type="status" value="JOINED"/>
    <property type="molecule type" value="Genomic_DNA"/>
</dbReference>
<dbReference type="EMBL" id="AF133501">
    <property type="protein sequence ID" value="AAF00110.1"/>
    <property type="status" value="JOINED"/>
    <property type="molecule type" value="Genomic_DNA"/>
</dbReference>
<dbReference type="EMBL" id="AF133502">
    <property type="protein sequence ID" value="AAF00110.1"/>
    <property type="status" value="JOINED"/>
    <property type="molecule type" value="Genomic_DNA"/>
</dbReference>
<dbReference type="EMBL" id="AF133503">
    <property type="protein sequence ID" value="AAF00110.1"/>
    <property type="status" value="JOINED"/>
    <property type="molecule type" value="Genomic_DNA"/>
</dbReference>
<dbReference type="EMBL" id="AF207953">
    <property type="status" value="NOT_ANNOTATED_CDS"/>
    <property type="molecule type" value="Genomic_DNA"/>
</dbReference>
<dbReference type="EMBL" id="BC105009">
    <property type="protein sequence ID" value="AAI05010.1"/>
    <property type="molecule type" value="mRNA"/>
</dbReference>
<dbReference type="EMBL" id="BC105011">
    <property type="protein sequence ID" value="AAI05012.1"/>
    <property type="molecule type" value="mRNA"/>
</dbReference>
<dbReference type="CCDS" id="CCDS83303.1">
    <molecule id="Q14541-1"/>
</dbReference>
<dbReference type="PIR" id="JC6095">
    <property type="entry name" value="JC6095"/>
</dbReference>
<dbReference type="RefSeq" id="NP_001317490.1">
    <molecule id="Q14541-1"/>
    <property type="nucleotide sequence ID" value="NM_001330561.2"/>
</dbReference>
<dbReference type="RefSeq" id="NP_004124.4">
    <property type="nucleotide sequence ID" value="NM_004133.4"/>
</dbReference>
<dbReference type="RefSeq" id="XP_016868862.1">
    <molecule id="Q14541-1"/>
    <property type="nucleotide sequence ID" value="XM_017013373.2"/>
</dbReference>
<dbReference type="RefSeq" id="XP_016868863.1">
    <molecule id="Q14541-1"/>
    <property type="nucleotide sequence ID" value="XM_017013374.2"/>
</dbReference>
<dbReference type="RefSeq" id="XP_016868864.1">
    <molecule id="Q14541-1"/>
    <property type="nucleotide sequence ID" value="XM_017013375.2"/>
</dbReference>
<dbReference type="RefSeq" id="XP_016868865.1">
    <molecule id="Q14541-1"/>
    <property type="nucleotide sequence ID" value="XM_017013376.3"/>
</dbReference>
<dbReference type="RefSeq" id="XP_047277693.1">
    <molecule id="Q14541-1"/>
    <property type="nucleotide sequence ID" value="XM_047421737.1"/>
</dbReference>
<dbReference type="RefSeq" id="XP_047277694.1">
    <molecule id="Q14541-1"/>
    <property type="nucleotide sequence ID" value="XM_047421738.1"/>
</dbReference>
<dbReference type="RefSeq" id="XP_047277695.1">
    <molecule id="Q14541-1"/>
    <property type="nucleotide sequence ID" value="XM_047421739.1"/>
</dbReference>
<dbReference type="RefSeq" id="XP_054216368.1">
    <molecule id="Q14541-1"/>
    <property type="nucleotide sequence ID" value="XM_054360393.1"/>
</dbReference>
<dbReference type="RefSeq" id="XP_054216369.1">
    <molecule id="Q14541-1"/>
    <property type="nucleotide sequence ID" value="XM_054360394.1"/>
</dbReference>
<dbReference type="RefSeq" id="XP_054216370.1">
    <molecule id="Q14541-1"/>
    <property type="nucleotide sequence ID" value="XM_054360395.1"/>
</dbReference>
<dbReference type="RefSeq" id="XP_054216371.1">
    <molecule id="Q14541-1"/>
    <property type="nucleotide sequence ID" value="XM_054360396.1"/>
</dbReference>
<dbReference type="PDB" id="1LV2">
    <property type="method" value="X-ray"/>
    <property type="resolution" value="2.70 A"/>
    <property type="chains" value="A=103-328"/>
</dbReference>
<dbReference type="PDBsum" id="1LV2"/>
<dbReference type="SMR" id="Q14541"/>
<dbReference type="BioGRID" id="109416">
    <property type="interactions" value="19"/>
</dbReference>
<dbReference type="FunCoup" id="Q14541">
    <property type="interactions" value="1767"/>
</dbReference>
<dbReference type="IntAct" id="Q14541">
    <property type="interactions" value="3"/>
</dbReference>
<dbReference type="STRING" id="9606.ENSP00000501146"/>
<dbReference type="ChEMBL" id="CHEMBL1961786"/>
<dbReference type="DrugBank" id="DB03796">
    <property type="generic name" value="Palmitic Acid"/>
</dbReference>
<dbReference type="iPTMnet" id="Q14541"/>
<dbReference type="PhosphoSitePlus" id="Q14541"/>
<dbReference type="BioMuta" id="HNF4G"/>
<dbReference type="DMDM" id="160110004"/>
<dbReference type="jPOST" id="Q14541"/>
<dbReference type="MassIVE" id="Q14541"/>
<dbReference type="PaxDb" id="9606-ENSP00000379701"/>
<dbReference type="PeptideAtlas" id="Q14541"/>
<dbReference type="ProteomicsDB" id="60035">
    <molecule id="Q14541-1"/>
</dbReference>
<dbReference type="ProteomicsDB" id="60036">
    <molecule id="Q14541-2"/>
</dbReference>
<dbReference type="Antibodypedia" id="1695">
    <property type="antibodies" value="177 antibodies from 28 providers"/>
</dbReference>
<dbReference type="DNASU" id="3174"/>
<dbReference type="Ensembl" id="ENST00000354370.5">
    <molecule id="Q14541-1"/>
    <property type="protein sequence ID" value="ENSP00000346339.1"/>
    <property type="gene ID" value="ENSG00000164749.13"/>
</dbReference>
<dbReference type="Ensembl" id="ENST00000674002.1">
    <molecule id="Q14541-2"/>
    <property type="protein sequence ID" value="ENSP00000501146.1"/>
    <property type="gene ID" value="ENSG00000164749.13"/>
</dbReference>
<dbReference type="GeneID" id="3174"/>
<dbReference type="KEGG" id="hsa:3174"/>
<dbReference type="UCSC" id="uc003yaq.4">
    <molecule id="Q14541-1"/>
    <property type="organism name" value="human"/>
</dbReference>
<dbReference type="AGR" id="HGNC:5026"/>
<dbReference type="CTD" id="3174"/>
<dbReference type="DisGeNET" id="3174"/>
<dbReference type="GeneCards" id="HNF4G"/>
<dbReference type="HGNC" id="HGNC:5026">
    <property type="gene designation" value="HNF4G"/>
</dbReference>
<dbReference type="HPA" id="ENSG00000164749">
    <property type="expression patterns" value="Tissue enriched (intestine)"/>
</dbReference>
<dbReference type="MIM" id="605966">
    <property type="type" value="gene"/>
</dbReference>
<dbReference type="neXtProt" id="NX_Q14541"/>
<dbReference type="OpenTargets" id="ENSG00000164749"/>
<dbReference type="PharmGKB" id="PA29351"/>
<dbReference type="VEuPathDB" id="HostDB:ENSG00000164749"/>
<dbReference type="eggNOG" id="KOG4215">
    <property type="taxonomic scope" value="Eukaryota"/>
</dbReference>
<dbReference type="GeneTree" id="ENSGT00940000158224"/>
<dbReference type="HOGENOM" id="CLU_007368_5_2_1"/>
<dbReference type="InParanoid" id="Q14541"/>
<dbReference type="OrthoDB" id="5771769at2759"/>
<dbReference type="PAN-GO" id="Q14541">
    <property type="GO annotations" value="5 GO annotations based on evolutionary models"/>
</dbReference>
<dbReference type="PhylomeDB" id="Q14541"/>
<dbReference type="TreeFam" id="TF352097"/>
<dbReference type="PathwayCommons" id="Q14541"/>
<dbReference type="Reactome" id="R-HSA-210745">
    <property type="pathway name" value="Regulation of gene expression in beta cells"/>
</dbReference>
<dbReference type="Reactome" id="R-HSA-383280">
    <property type="pathway name" value="Nuclear Receptor transcription pathway"/>
</dbReference>
<dbReference type="SignaLink" id="Q14541"/>
<dbReference type="SIGNOR" id="Q14541"/>
<dbReference type="BioGRID-ORCS" id="3174">
    <property type="hits" value="20 hits in 1175 CRISPR screens"/>
</dbReference>
<dbReference type="ChiTaRS" id="HNF4G">
    <property type="organism name" value="human"/>
</dbReference>
<dbReference type="EvolutionaryTrace" id="Q14541"/>
<dbReference type="GeneWiki" id="Hepatocyte_nuclear_factor_4_gamma"/>
<dbReference type="GenomeRNAi" id="3174"/>
<dbReference type="Pharos" id="Q14541">
    <property type="development level" value="Tbio"/>
</dbReference>
<dbReference type="PRO" id="PR:Q14541"/>
<dbReference type="Proteomes" id="UP000005640">
    <property type="component" value="Chromosome 8"/>
</dbReference>
<dbReference type="RNAct" id="Q14541">
    <property type="molecule type" value="protein"/>
</dbReference>
<dbReference type="Bgee" id="ENSG00000164749">
    <property type="expression patterns" value="Expressed in jejunal mucosa and 93 other cell types or tissues"/>
</dbReference>
<dbReference type="ExpressionAtlas" id="Q14541">
    <property type="expression patterns" value="baseline and differential"/>
</dbReference>
<dbReference type="GO" id="GO:0000785">
    <property type="term" value="C:chromatin"/>
    <property type="evidence" value="ECO:0000247"/>
    <property type="project" value="NTNU_SB"/>
</dbReference>
<dbReference type="GO" id="GO:0005829">
    <property type="term" value="C:cytosol"/>
    <property type="evidence" value="ECO:0000314"/>
    <property type="project" value="HPA"/>
</dbReference>
<dbReference type="GO" id="GO:0045171">
    <property type="term" value="C:intercellular bridge"/>
    <property type="evidence" value="ECO:0000314"/>
    <property type="project" value="HPA"/>
</dbReference>
<dbReference type="GO" id="GO:0072686">
    <property type="term" value="C:mitotic spindle"/>
    <property type="evidence" value="ECO:0000314"/>
    <property type="project" value="HPA"/>
</dbReference>
<dbReference type="GO" id="GO:0005654">
    <property type="term" value="C:nucleoplasm"/>
    <property type="evidence" value="ECO:0000314"/>
    <property type="project" value="HPA"/>
</dbReference>
<dbReference type="GO" id="GO:0001228">
    <property type="term" value="F:DNA-binding transcription activator activity, RNA polymerase II-specific"/>
    <property type="evidence" value="ECO:0000314"/>
    <property type="project" value="NTNU_SB"/>
</dbReference>
<dbReference type="GO" id="GO:0003700">
    <property type="term" value="F:DNA-binding transcription factor activity"/>
    <property type="evidence" value="ECO:0000304"/>
    <property type="project" value="ProtInc"/>
</dbReference>
<dbReference type="GO" id="GO:0000981">
    <property type="term" value="F:DNA-binding transcription factor activity, RNA polymerase II-specific"/>
    <property type="evidence" value="ECO:0000247"/>
    <property type="project" value="NTNU_SB"/>
</dbReference>
<dbReference type="GO" id="GO:0004879">
    <property type="term" value="F:nuclear receptor activity"/>
    <property type="evidence" value="ECO:0000318"/>
    <property type="project" value="GO_Central"/>
</dbReference>
<dbReference type="GO" id="GO:0000978">
    <property type="term" value="F:RNA polymerase II cis-regulatory region sequence-specific DNA binding"/>
    <property type="evidence" value="ECO:0000314"/>
    <property type="project" value="NTNU_SB"/>
</dbReference>
<dbReference type="GO" id="GO:0008270">
    <property type="term" value="F:zinc ion binding"/>
    <property type="evidence" value="ECO:0007669"/>
    <property type="project" value="UniProtKB-KW"/>
</dbReference>
<dbReference type="GO" id="GO:0030154">
    <property type="term" value="P:cell differentiation"/>
    <property type="evidence" value="ECO:0000318"/>
    <property type="project" value="GO_Central"/>
</dbReference>
<dbReference type="GO" id="GO:0045944">
    <property type="term" value="P:positive regulation of transcription by RNA polymerase II"/>
    <property type="evidence" value="ECO:0000314"/>
    <property type="project" value="NTNU_SB"/>
</dbReference>
<dbReference type="GO" id="GO:0006357">
    <property type="term" value="P:regulation of transcription by RNA polymerase II"/>
    <property type="evidence" value="ECO:0000304"/>
    <property type="project" value="ProtInc"/>
</dbReference>
<dbReference type="CDD" id="cd06960">
    <property type="entry name" value="NR_DBD_HNF4A"/>
    <property type="match status" value="1"/>
</dbReference>
<dbReference type="CDD" id="cd06931">
    <property type="entry name" value="NR_LBD_HNF4_like"/>
    <property type="match status" value="1"/>
</dbReference>
<dbReference type="FunFam" id="1.10.565.10:FF:000007">
    <property type="entry name" value="Hepatocyte nuclear factor 4 alpha"/>
    <property type="match status" value="1"/>
</dbReference>
<dbReference type="FunFam" id="3.30.50.10:FF:000012">
    <property type="entry name" value="Hepatocyte nuclear factor 4, alpha"/>
    <property type="match status" value="1"/>
</dbReference>
<dbReference type="Gene3D" id="3.30.50.10">
    <property type="entry name" value="Erythroid Transcription Factor GATA-1, subunit A"/>
    <property type="match status" value="1"/>
</dbReference>
<dbReference type="Gene3D" id="1.10.565.10">
    <property type="entry name" value="Retinoid X Receptor"/>
    <property type="match status" value="1"/>
</dbReference>
<dbReference type="IDEAL" id="IID00077"/>
<dbReference type="InterPro" id="IPR049636">
    <property type="entry name" value="HNF4-like_DBD"/>
</dbReference>
<dbReference type="InterPro" id="IPR049635">
    <property type="entry name" value="HNF4_LBD"/>
</dbReference>
<dbReference type="InterPro" id="IPR035500">
    <property type="entry name" value="NHR-like_dom_sf"/>
</dbReference>
<dbReference type="InterPro" id="IPR000536">
    <property type="entry name" value="Nucl_hrmn_rcpt_lig-bd"/>
</dbReference>
<dbReference type="InterPro" id="IPR050274">
    <property type="entry name" value="Nuclear_hormone_rcpt_NR2"/>
</dbReference>
<dbReference type="InterPro" id="IPR001723">
    <property type="entry name" value="Nuclear_hrmn_rcpt"/>
</dbReference>
<dbReference type="InterPro" id="IPR001628">
    <property type="entry name" value="Znf_hrmn_rcpt"/>
</dbReference>
<dbReference type="InterPro" id="IPR013088">
    <property type="entry name" value="Znf_NHR/GATA"/>
</dbReference>
<dbReference type="PANTHER" id="PTHR24083">
    <property type="entry name" value="NUCLEAR HORMONE RECEPTOR"/>
    <property type="match status" value="1"/>
</dbReference>
<dbReference type="Pfam" id="PF00104">
    <property type="entry name" value="Hormone_recep"/>
    <property type="match status" value="1"/>
</dbReference>
<dbReference type="Pfam" id="PF00105">
    <property type="entry name" value="zf-C4"/>
    <property type="match status" value="1"/>
</dbReference>
<dbReference type="PRINTS" id="PR01282">
    <property type="entry name" value="COUPTNFACTOR"/>
</dbReference>
<dbReference type="PRINTS" id="PR00398">
    <property type="entry name" value="STRDHORMONER"/>
</dbReference>
<dbReference type="PRINTS" id="PR00047">
    <property type="entry name" value="STROIDFINGER"/>
</dbReference>
<dbReference type="SMART" id="SM00430">
    <property type="entry name" value="HOLI"/>
    <property type="match status" value="1"/>
</dbReference>
<dbReference type="SMART" id="SM00399">
    <property type="entry name" value="ZnF_C4"/>
    <property type="match status" value="1"/>
</dbReference>
<dbReference type="SUPFAM" id="SSF57716">
    <property type="entry name" value="Glucocorticoid receptor-like (DNA-binding domain)"/>
    <property type="match status" value="1"/>
</dbReference>
<dbReference type="SUPFAM" id="SSF48508">
    <property type="entry name" value="Nuclear receptor ligand-binding domain"/>
    <property type="match status" value="1"/>
</dbReference>
<dbReference type="PROSITE" id="PS51843">
    <property type="entry name" value="NR_LBD"/>
    <property type="match status" value="1"/>
</dbReference>
<dbReference type="PROSITE" id="PS00031">
    <property type="entry name" value="NUCLEAR_REC_DBD_1"/>
    <property type="match status" value="1"/>
</dbReference>
<dbReference type="PROSITE" id="PS51030">
    <property type="entry name" value="NUCLEAR_REC_DBD_2"/>
    <property type="match status" value="1"/>
</dbReference>
<evidence type="ECO:0000250" key="1">
    <source>
        <dbReference type="UniProtKB" id="P22449"/>
    </source>
</evidence>
<evidence type="ECO:0000250" key="2">
    <source>
        <dbReference type="UniProtKB" id="P49698"/>
    </source>
</evidence>
<evidence type="ECO:0000255" key="3">
    <source>
        <dbReference type="PROSITE-ProRule" id="PRU00407"/>
    </source>
</evidence>
<evidence type="ECO:0000255" key="4">
    <source>
        <dbReference type="PROSITE-ProRule" id="PRU01189"/>
    </source>
</evidence>
<evidence type="ECO:0000256" key="5">
    <source>
        <dbReference type="SAM" id="MobiDB-lite"/>
    </source>
</evidence>
<evidence type="ECO:0000269" key="6">
    <source>
    </source>
</evidence>
<evidence type="ECO:0000303" key="7">
    <source>
    </source>
</evidence>
<evidence type="ECO:0000305" key="8"/>
<evidence type="ECO:0007829" key="9">
    <source>
        <dbReference type="PDB" id="1LV2"/>
    </source>
</evidence>
<keyword id="KW-0002">3D-structure</keyword>
<keyword id="KW-0025">Alternative splicing</keyword>
<keyword id="KW-0238">DNA-binding</keyword>
<keyword id="KW-0479">Metal-binding</keyword>
<keyword id="KW-0539">Nucleus</keyword>
<keyword id="KW-0597">Phosphoprotein</keyword>
<keyword id="KW-1267">Proteomics identification</keyword>
<keyword id="KW-0675">Receptor</keyword>
<keyword id="KW-1185">Reference proteome</keyword>
<keyword id="KW-0804">Transcription</keyword>
<keyword id="KW-0805">Transcription regulation</keyword>
<keyword id="KW-0862">Zinc</keyword>
<keyword id="KW-0863">Zinc-finger</keyword>
<accession>Q14541</accession>
<accession>Q7Z2V9</accession>
<accession>Q9UH81</accession>
<accession>Q9UIS6</accession>
<name>HNF4G_HUMAN</name>
<comment type="function">
    <text>Transcription factor. Has a lower transcription activation potential than HNF4-alpha.</text>
</comment>
<comment type="interaction">
    <interactant intactId="EBI-18543805">
        <id>Q14541-2</id>
    </interactant>
    <interactant intactId="EBI-9977294">
        <id>Q9UEG4</id>
        <label>ZNF629</label>
    </interactant>
    <organismsDiffer>false</organismsDiffer>
    <experiments>3</experiments>
</comment>
<comment type="subcellular location">
    <subcellularLocation>
        <location evidence="3">Nucleus</location>
    </subcellularLocation>
</comment>
<comment type="alternative products">
    <event type="alternative splicing"/>
    <isoform>
        <id>Q14541-1</id>
        <name>1</name>
        <sequence type="displayed"/>
    </isoform>
    <isoform>
        <id>Q14541-2</id>
        <name>2</name>
        <sequence type="described" ref="VSP_037691"/>
    </isoform>
</comment>
<comment type="tissue specificity">
    <text>Expressed in pancreas, kidney, small intestine and testis. Weakly expressed in colon. Not expressed in liver, skeletal muscle, lung, placenta, brain, heart, peripheral blood, ovary, prostate, thymus and spleen.</text>
</comment>
<comment type="similarity">
    <text evidence="8">Belongs to the nuclear hormone receptor family. NR2 subfamily.</text>
</comment>
<comment type="sequence caution" evidence="8">
    <conflict type="erroneous initiation">
        <sequence resource="EMBL-CDS" id="CAE11875"/>
    </conflict>
</comment>
<comment type="online information" name="Wikipedia">
    <link uri="https://en.wikipedia.org/wiki/Hepatocyte_nuclear_factors"/>
    <text>Hepatocyte nuclear factors entry</text>
</comment>
<sequence>MNTTDNGVNCLCAICGDRATGKHYGASSCDGCKGFFRRSIRKSHVYSCRFSRQCVVDKDKRNQCRYCRLRKCFRAGMKKEAVQNERDRISTRRSTFDGSNIPSINTLAQAEVRSRQISVSSPGSSTDINVKKIASIGDVCESMKQQLLVLVEWAKYIPAFCELPLDDQVALLRAHAGEHLLLGATKRSMMYKDILLLGNNYVIHRNSCEVEISRVANRVLDELVRPFQEIQIDDNEYACLKAIVFFDPDAKGLSDPVKIKNMRFQVQIGLEDYINDRQYDSRGRFGELLLLLPTLQSITWQMIEQIQFVKLFGMVKIDNLLQEMLLGGASNDGSHLHHPMHPHLSQDPLTGQTILLGPMSTLVHADQISTPETPLPSPPQGSGQEQYKIAANQASVISHQHLSKQKQL</sequence>
<feature type="chain" id="PRO_0000053562" description="Hepatocyte nuclear factor 4-gamma">
    <location>
        <begin position="1"/>
        <end position="408"/>
    </location>
</feature>
<feature type="domain" description="NR LBD" evidence="4">
    <location>
        <begin position="99"/>
        <end position="328"/>
    </location>
</feature>
<feature type="DNA-binding region" description="Nuclear receptor" evidence="3">
    <location>
        <begin position="9"/>
        <end position="84"/>
    </location>
</feature>
<feature type="zinc finger region" description="NR C4-type" evidence="3">
    <location>
        <begin position="12"/>
        <end position="32"/>
    </location>
</feature>
<feature type="zinc finger region" description="NR C4-type" evidence="3">
    <location>
        <begin position="48"/>
        <end position="72"/>
    </location>
</feature>
<feature type="region of interest" description="Disordered" evidence="5">
    <location>
        <begin position="368"/>
        <end position="390"/>
    </location>
</feature>
<feature type="modified residue" description="Phosphoserine" evidence="1">
    <location>
        <position position="94"/>
    </location>
</feature>
<feature type="modified residue" description="Phosphothreonine" evidence="2">
    <location>
        <position position="370"/>
    </location>
</feature>
<feature type="modified residue" description="Phosphothreonine" evidence="2">
    <location>
        <position position="373"/>
    </location>
</feature>
<feature type="modified residue" description="Phosphoserine" evidence="2">
    <location>
        <position position="377"/>
    </location>
</feature>
<feature type="splice variant" id="VSP_037691" description="In isoform 2." evidence="7">
    <original>M</original>
    <variation>MDMANYSEVLDPTYTTLEFETMQILYNSSDSSAPETSM</variation>
    <location>
        <position position="1"/>
    </location>
</feature>
<feature type="sequence variant" id="VAR_009704" description="In dbSNP:rs1805098." evidence="6">
    <original>M</original>
    <variation>I</variation>
    <location>
        <position position="190"/>
    </location>
</feature>
<feature type="sequence conflict" description="In Ref. 1; CAA89990 and 3; AAF00110." evidence="8" ref="1 3">
    <original>S</original>
    <variation>T</variation>
    <location>
        <position position="28"/>
    </location>
</feature>
<feature type="sequence conflict" description="In Ref. 1; CAA89990 and 3; AAF00110." evidence="8" ref="1 3">
    <original>V</original>
    <variation>I</variation>
    <location>
        <position position="45"/>
    </location>
</feature>
<feature type="helix" evidence="9">
    <location>
        <begin position="103"/>
        <end position="116"/>
    </location>
</feature>
<feature type="helix" evidence="9">
    <location>
        <begin position="136"/>
        <end position="155"/>
    </location>
</feature>
<feature type="helix" evidence="9">
    <location>
        <begin position="158"/>
        <end position="161"/>
    </location>
</feature>
<feature type="helix" evidence="9">
    <location>
        <begin position="167"/>
        <end position="174"/>
    </location>
</feature>
<feature type="helix" evidence="9">
    <location>
        <begin position="176"/>
        <end position="188"/>
    </location>
</feature>
<feature type="strand" evidence="9">
    <location>
        <begin position="191"/>
        <end position="196"/>
    </location>
</feature>
<feature type="strand" evidence="9">
    <location>
        <begin position="202"/>
        <end position="204"/>
    </location>
</feature>
<feature type="turn" evidence="9">
    <location>
        <begin position="210"/>
        <end position="212"/>
    </location>
</feature>
<feature type="helix" evidence="9">
    <location>
        <begin position="213"/>
        <end position="222"/>
    </location>
</feature>
<feature type="helix" evidence="9">
    <location>
        <begin position="224"/>
        <end position="230"/>
    </location>
</feature>
<feature type="helix" evidence="9">
    <location>
        <begin position="234"/>
        <end position="245"/>
    </location>
</feature>
<feature type="helix" evidence="9">
    <location>
        <begin position="256"/>
        <end position="275"/>
    </location>
</feature>
<feature type="strand" evidence="9">
    <location>
        <begin position="277"/>
        <end position="280"/>
    </location>
</feature>
<feature type="turn" evidence="9">
    <location>
        <begin position="281"/>
        <end position="283"/>
    </location>
</feature>
<feature type="helix" evidence="9">
    <location>
        <begin position="284"/>
        <end position="289"/>
    </location>
</feature>
<feature type="helix" evidence="9">
    <location>
        <begin position="292"/>
        <end position="311"/>
    </location>
</feature>
<feature type="helix" evidence="9">
    <location>
        <begin position="319"/>
        <end position="324"/>
    </location>
</feature>
<feature type="turn" evidence="9">
    <location>
        <begin position="325"/>
        <end position="327"/>
    </location>
</feature>
<protein>
    <recommendedName>
        <fullName>Hepatocyte nuclear factor 4-gamma</fullName>
        <shortName>HNF-4-gamma</shortName>
    </recommendedName>
    <alternativeName>
        <fullName>Nuclear receptor subfamily 2 group A member 2</fullName>
    </alternativeName>
</protein>